<organism>
    <name type="scientific">Chaetomium globosum (strain ATCC 6205 / CBS 148.51 / DSM 1962 / NBRC 6347 / NRRL 1970)</name>
    <name type="common">Soil fungus</name>
    <dbReference type="NCBI Taxonomy" id="306901"/>
    <lineage>
        <taxon>Eukaryota</taxon>
        <taxon>Fungi</taxon>
        <taxon>Dikarya</taxon>
        <taxon>Ascomycota</taxon>
        <taxon>Pezizomycotina</taxon>
        <taxon>Sordariomycetes</taxon>
        <taxon>Sordariomycetidae</taxon>
        <taxon>Sordariales</taxon>
        <taxon>Chaetomiaceae</taxon>
        <taxon>Chaetomium</taxon>
    </lineage>
</organism>
<accession>Q2GWJ5</accession>
<proteinExistence type="inferred from homology"/>
<gene>
    <name type="primary">FAL1</name>
    <name type="ORF">CHGG_07659</name>
</gene>
<protein>
    <recommendedName>
        <fullName>ATP-dependent RNA helicase FAL1</fullName>
        <ecNumber>3.6.4.13</ecNumber>
    </recommendedName>
</protein>
<dbReference type="EC" id="3.6.4.13"/>
<dbReference type="EMBL" id="CH408033">
    <property type="protein sequence ID" value="EAQ86406.1"/>
    <property type="molecule type" value="Genomic_DNA"/>
</dbReference>
<dbReference type="RefSeq" id="XP_001225315.1">
    <property type="nucleotide sequence ID" value="XM_001225314.1"/>
</dbReference>
<dbReference type="SMR" id="Q2GWJ5"/>
<dbReference type="FunCoup" id="Q2GWJ5">
    <property type="interactions" value="566"/>
</dbReference>
<dbReference type="STRING" id="306901.Q2GWJ5"/>
<dbReference type="GeneID" id="4393890"/>
<dbReference type="VEuPathDB" id="FungiDB:CHGG_07659"/>
<dbReference type="eggNOG" id="KOG0328">
    <property type="taxonomic scope" value="Eukaryota"/>
</dbReference>
<dbReference type="HOGENOM" id="CLU_003041_1_0_1"/>
<dbReference type="InParanoid" id="Q2GWJ5"/>
<dbReference type="OMA" id="TRFHDFK"/>
<dbReference type="OrthoDB" id="10265785at2759"/>
<dbReference type="Proteomes" id="UP000001056">
    <property type="component" value="Unassembled WGS sequence"/>
</dbReference>
<dbReference type="GO" id="GO:0030874">
    <property type="term" value="C:nucleolar chromatin"/>
    <property type="evidence" value="ECO:0007669"/>
    <property type="project" value="EnsemblFungi"/>
</dbReference>
<dbReference type="GO" id="GO:0005524">
    <property type="term" value="F:ATP binding"/>
    <property type="evidence" value="ECO:0007669"/>
    <property type="project" value="UniProtKB-KW"/>
</dbReference>
<dbReference type="GO" id="GO:0016887">
    <property type="term" value="F:ATP hydrolysis activity"/>
    <property type="evidence" value="ECO:0007669"/>
    <property type="project" value="RHEA"/>
</dbReference>
<dbReference type="GO" id="GO:0003723">
    <property type="term" value="F:RNA binding"/>
    <property type="evidence" value="ECO:0007669"/>
    <property type="project" value="UniProtKB-KW"/>
</dbReference>
<dbReference type="GO" id="GO:0003724">
    <property type="term" value="F:RNA helicase activity"/>
    <property type="evidence" value="ECO:0007669"/>
    <property type="project" value="UniProtKB-EC"/>
</dbReference>
<dbReference type="GO" id="GO:0006364">
    <property type="term" value="P:rRNA processing"/>
    <property type="evidence" value="ECO:0007669"/>
    <property type="project" value="UniProtKB-KW"/>
</dbReference>
<dbReference type="CDD" id="cd18045">
    <property type="entry name" value="DEADc_EIF4AIII_DDX48"/>
    <property type="match status" value="1"/>
</dbReference>
<dbReference type="CDD" id="cd18787">
    <property type="entry name" value="SF2_C_DEAD"/>
    <property type="match status" value="1"/>
</dbReference>
<dbReference type="FunFam" id="3.40.50.300:FF:000031">
    <property type="entry name" value="Eukaryotic initiation factor 4A-III"/>
    <property type="match status" value="1"/>
</dbReference>
<dbReference type="FunFam" id="3.40.50.300:FF:000498">
    <property type="entry name" value="Eukaryotic initiation factor 4A-III"/>
    <property type="match status" value="1"/>
</dbReference>
<dbReference type="Gene3D" id="3.40.50.300">
    <property type="entry name" value="P-loop containing nucleotide triphosphate hydrolases"/>
    <property type="match status" value="2"/>
</dbReference>
<dbReference type="InterPro" id="IPR011545">
    <property type="entry name" value="DEAD/DEAH_box_helicase_dom"/>
</dbReference>
<dbReference type="InterPro" id="IPR014001">
    <property type="entry name" value="Helicase_ATP-bd"/>
</dbReference>
<dbReference type="InterPro" id="IPR001650">
    <property type="entry name" value="Helicase_C-like"/>
</dbReference>
<dbReference type="InterPro" id="IPR027417">
    <property type="entry name" value="P-loop_NTPase"/>
</dbReference>
<dbReference type="InterPro" id="IPR000629">
    <property type="entry name" value="RNA-helicase_DEAD-box_CS"/>
</dbReference>
<dbReference type="InterPro" id="IPR014014">
    <property type="entry name" value="RNA_helicase_DEAD_Q_motif"/>
</dbReference>
<dbReference type="PANTHER" id="PTHR47958">
    <property type="entry name" value="ATP-DEPENDENT RNA HELICASE DBP3"/>
    <property type="match status" value="1"/>
</dbReference>
<dbReference type="Pfam" id="PF00270">
    <property type="entry name" value="DEAD"/>
    <property type="match status" value="1"/>
</dbReference>
<dbReference type="Pfam" id="PF00271">
    <property type="entry name" value="Helicase_C"/>
    <property type="match status" value="1"/>
</dbReference>
<dbReference type="SMART" id="SM00487">
    <property type="entry name" value="DEXDc"/>
    <property type="match status" value="1"/>
</dbReference>
<dbReference type="SMART" id="SM00490">
    <property type="entry name" value="HELICc"/>
    <property type="match status" value="1"/>
</dbReference>
<dbReference type="SUPFAM" id="SSF52540">
    <property type="entry name" value="P-loop containing nucleoside triphosphate hydrolases"/>
    <property type="match status" value="1"/>
</dbReference>
<dbReference type="PROSITE" id="PS00039">
    <property type="entry name" value="DEAD_ATP_HELICASE"/>
    <property type="match status" value="1"/>
</dbReference>
<dbReference type="PROSITE" id="PS51192">
    <property type="entry name" value="HELICASE_ATP_BIND_1"/>
    <property type="match status" value="1"/>
</dbReference>
<dbReference type="PROSITE" id="PS51194">
    <property type="entry name" value="HELICASE_CTER"/>
    <property type="match status" value="1"/>
</dbReference>
<dbReference type="PROSITE" id="PS51195">
    <property type="entry name" value="Q_MOTIF"/>
    <property type="match status" value="1"/>
</dbReference>
<name>FAL1_CHAGB</name>
<comment type="function">
    <text evidence="1">ATP-dependent RNA helicase involved in 40S ribosomal subunit biogenesis. Required for the processing and cleavage of 35S pre-rRNA at sites A0, A1, and A2, leading to mature 18S rRNA (By similarity).</text>
</comment>
<comment type="catalytic activity">
    <reaction>
        <text>ATP + H2O = ADP + phosphate + H(+)</text>
        <dbReference type="Rhea" id="RHEA:13065"/>
        <dbReference type="ChEBI" id="CHEBI:15377"/>
        <dbReference type="ChEBI" id="CHEBI:15378"/>
        <dbReference type="ChEBI" id="CHEBI:30616"/>
        <dbReference type="ChEBI" id="CHEBI:43474"/>
        <dbReference type="ChEBI" id="CHEBI:456216"/>
        <dbReference type="EC" id="3.6.4.13"/>
    </reaction>
</comment>
<comment type="subcellular location">
    <subcellularLocation>
        <location evidence="1">Nucleus</location>
        <location evidence="1">Nucleolus</location>
    </subcellularLocation>
</comment>
<comment type="domain">
    <text>The Q motif is unique to and characteristic of the DEAD box family of RNA helicases and controls ATP binding and hydrolysis.</text>
</comment>
<comment type="similarity">
    <text evidence="4">Belongs to the DEAD box helicase family. DDX48/FAL1 subfamily.</text>
</comment>
<keyword id="KW-0067">ATP-binding</keyword>
<keyword id="KW-0347">Helicase</keyword>
<keyword id="KW-0378">Hydrolase</keyword>
<keyword id="KW-0547">Nucleotide-binding</keyword>
<keyword id="KW-0539">Nucleus</keyword>
<keyword id="KW-1185">Reference proteome</keyword>
<keyword id="KW-0690">Ribosome biogenesis</keyword>
<keyword id="KW-0694">RNA-binding</keyword>
<keyword id="KW-0698">rRNA processing</keyword>
<sequence>MADGAGIDRKADEKIQFSTSKEVTVHPTFESMSLKESLLRGIYAYGYESPSAVQSRAIVQICKGRDTIAQAQSGTGKTATFSISMLQVIDTAVRETQALVLSPTRELATQIQSVVMALGDYMNVQCHACIGGTNVGEDIRKLDYGQHIVSGTPGRVADMIRRRHLRTRHIKMLVLDEADELLNQGFREQIYDVYRYLPPATQVVVVSATLPYDVLDMTTKFMTDPVRILVKRDELTLEGLKQYFIAVEKEDWKFDTLCDLYDTLTITQAVIFCNTRRKVDWLTDKMREANFTVSSMHGDMPQKERDSIMQDFRQGNSRVLISTDVWARGIDVQQVSLVINYDLPSNRENYIHRIGRSGRFGRKGVAINFVTSEDVRILRDIECMWLPSPCFSCG</sequence>
<reference key="1">
    <citation type="journal article" date="2015" name="Genome Announc.">
        <title>Draft genome sequence of the cellulolytic fungus Chaetomium globosum.</title>
        <authorList>
            <person name="Cuomo C.A."/>
            <person name="Untereiner W.A."/>
            <person name="Ma L.-J."/>
            <person name="Grabherr M."/>
            <person name="Birren B.W."/>
        </authorList>
    </citation>
    <scope>NUCLEOTIDE SEQUENCE [LARGE SCALE GENOMIC DNA]</scope>
    <source>
        <strain>ATCC 6205 / CBS 148.51 / DSM 1962 / NBRC 6347 / NRRL 1970</strain>
    </source>
</reference>
<feature type="chain" id="PRO_0000255985" description="ATP-dependent RNA helicase FAL1">
    <location>
        <begin position="1"/>
        <end position="394"/>
    </location>
</feature>
<feature type="domain" description="Helicase ATP-binding" evidence="2">
    <location>
        <begin position="58"/>
        <end position="228"/>
    </location>
</feature>
<feature type="domain" description="Helicase C-terminal" evidence="3">
    <location>
        <begin position="239"/>
        <end position="394"/>
    </location>
</feature>
<feature type="short sequence motif" description="Q motif">
    <location>
        <begin position="27"/>
        <end position="55"/>
    </location>
</feature>
<feature type="short sequence motif" description="DEAD box">
    <location>
        <begin position="176"/>
        <end position="179"/>
    </location>
</feature>
<feature type="binding site" evidence="2">
    <location>
        <begin position="71"/>
        <end position="78"/>
    </location>
    <ligand>
        <name>ATP</name>
        <dbReference type="ChEBI" id="CHEBI:30616"/>
    </ligand>
</feature>
<evidence type="ECO:0000250" key="1"/>
<evidence type="ECO:0000255" key="2">
    <source>
        <dbReference type="PROSITE-ProRule" id="PRU00541"/>
    </source>
</evidence>
<evidence type="ECO:0000255" key="3">
    <source>
        <dbReference type="PROSITE-ProRule" id="PRU00542"/>
    </source>
</evidence>
<evidence type="ECO:0000305" key="4"/>